<organism>
    <name type="scientific">Borreliella burgdorferi (strain ATCC 35210 / DSM 4680 / CIP 102532 / B31)</name>
    <name type="common">Borrelia burgdorferi</name>
    <dbReference type="NCBI Taxonomy" id="224326"/>
    <lineage>
        <taxon>Bacteria</taxon>
        <taxon>Pseudomonadati</taxon>
        <taxon>Spirochaetota</taxon>
        <taxon>Spirochaetia</taxon>
        <taxon>Spirochaetales</taxon>
        <taxon>Borreliaceae</taxon>
        <taxon>Borreliella</taxon>
    </lineage>
</organism>
<protein>
    <recommendedName>
        <fullName evidence="1">Cell division protein FtsA</fullName>
    </recommendedName>
</protein>
<comment type="function">
    <text evidence="1">Cell division protein that is involved in the assembly of the Z ring. May serve as a membrane anchor for the Z ring.</text>
</comment>
<comment type="subunit">
    <text evidence="1">Self-interacts. Interacts with FtsZ.</text>
</comment>
<comment type="subcellular location">
    <subcellularLocation>
        <location evidence="1">Cell inner membrane</location>
        <topology evidence="1">Peripheral membrane protein</topology>
        <orientation evidence="1">Cytoplasmic side</orientation>
    </subcellularLocation>
    <text evidence="1">Localizes to the Z ring in an FtsZ-dependent manner. Targeted to the membrane through a conserved C-terminal amphipathic helix.</text>
</comment>
<comment type="similarity">
    <text evidence="1">Belongs to the FtsA/MreB family.</text>
</comment>
<reference key="1">
    <citation type="submission" date="1995-12" db="EMBL/GenBank/DDBJ databases">
        <authorList>
            <person name="Dunn J.J."/>
            <person name="Butler-Loffredo L."/>
            <person name="Kieleczawa J."/>
            <person name="Medalle J."/>
            <person name="Luft B.J."/>
        </authorList>
    </citation>
    <scope>NUCLEOTIDE SEQUENCE [GENOMIC DNA]</scope>
    <source>
        <strain>ATCC 35210 / DSM 4680 / CIP 102532 / B31</strain>
    </source>
</reference>
<reference key="2">
    <citation type="submission" date="1996-02" db="EMBL/GenBank/DDBJ databases">
        <authorList>
            <person name="Ge Y."/>
            <person name="Old I.G."/>
            <person name="Saint Girons I."/>
            <person name="Charon N.W."/>
        </authorList>
    </citation>
    <scope>NUCLEOTIDE SEQUENCE [GENOMIC DNA]</scope>
    <source>
        <strain>212</strain>
    </source>
</reference>
<reference key="3">
    <citation type="journal article" date="1997" name="Nature">
        <title>Genomic sequence of a Lyme disease spirochaete, Borrelia burgdorferi.</title>
        <authorList>
            <person name="Fraser C.M."/>
            <person name="Casjens S."/>
            <person name="Huang W.M."/>
            <person name="Sutton G.G."/>
            <person name="Clayton R.A."/>
            <person name="Lathigra R."/>
            <person name="White O."/>
            <person name="Ketchum K.A."/>
            <person name="Dodson R.J."/>
            <person name="Hickey E.K."/>
            <person name="Gwinn M.L."/>
            <person name="Dougherty B.A."/>
            <person name="Tomb J.-F."/>
            <person name="Fleischmann R.D."/>
            <person name="Richardson D.L."/>
            <person name="Peterson J.D."/>
            <person name="Kerlavage A.R."/>
            <person name="Quackenbush J."/>
            <person name="Salzberg S.L."/>
            <person name="Hanson M."/>
            <person name="van Vugt R."/>
            <person name="Palmer N."/>
            <person name="Adams M.D."/>
            <person name="Gocayne J.D."/>
            <person name="Weidman J.F."/>
            <person name="Utterback T.R."/>
            <person name="Watthey L."/>
            <person name="McDonald L.A."/>
            <person name="Artiach P."/>
            <person name="Bowman C."/>
            <person name="Garland S.A."/>
            <person name="Fujii C."/>
            <person name="Cotton M.D."/>
            <person name="Horst K."/>
            <person name="Roberts K.M."/>
            <person name="Hatch B."/>
            <person name="Smith H.O."/>
            <person name="Venter J.C."/>
        </authorList>
    </citation>
    <scope>NUCLEOTIDE SEQUENCE [LARGE SCALE GENOMIC DNA]</scope>
    <source>
        <strain>ATCC 35210 / DSM 4680 / CIP 102532 / B31</strain>
    </source>
</reference>
<name>FTSA_BORBU</name>
<dbReference type="EMBL" id="U43739">
    <property type="protein sequence ID" value="AAA85623.1"/>
    <property type="molecule type" value="Genomic_DNA"/>
</dbReference>
<dbReference type="EMBL" id="Z12164">
    <property type="protein sequence ID" value="CAA78155.1"/>
    <property type="molecule type" value="Genomic_DNA"/>
</dbReference>
<dbReference type="EMBL" id="X96685">
    <property type="protein sequence ID" value="CAA65463.1"/>
    <property type="molecule type" value="Genomic_DNA"/>
</dbReference>
<dbReference type="EMBL" id="X96433">
    <property type="protein sequence ID" value="CAA65296.1"/>
    <property type="molecule type" value="Genomic_DNA"/>
</dbReference>
<dbReference type="EMBL" id="L76303">
    <property type="protein sequence ID" value="AAB51401.1"/>
    <property type="molecule type" value="Genomic_DNA"/>
</dbReference>
<dbReference type="EMBL" id="AE000783">
    <property type="protein sequence ID" value="AAC66648.1"/>
    <property type="molecule type" value="Genomic_DNA"/>
</dbReference>
<dbReference type="PIR" id="D70137">
    <property type="entry name" value="D70137"/>
</dbReference>
<dbReference type="RefSeq" id="NP_212434.1">
    <property type="nucleotide sequence ID" value="NC_001318.1"/>
</dbReference>
<dbReference type="RefSeq" id="WP_002656287.1">
    <property type="nucleotide sequence ID" value="NC_001318.1"/>
</dbReference>
<dbReference type="SMR" id="Q44774"/>
<dbReference type="STRING" id="224326.BB_0300"/>
<dbReference type="PaxDb" id="224326-BB_0300"/>
<dbReference type="DNASU" id="1195137"/>
<dbReference type="EnsemblBacteria" id="AAC66648">
    <property type="protein sequence ID" value="AAC66648"/>
    <property type="gene ID" value="BB_0300"/>
</dbReference>
<dbReference type="GeneID" id="56567731"/>
<dbReference type="KEGG" id="bbu:BB_0300"/>
<dbReference type="PATRIC" id="fig|224326.49.peg.699"/>
<dbReference type="HOGENOM" id="CLU_037850_3_2_12"/>
<dbReference type="OrthoDB" id="9768127at2"/>
<dbReference type="Proteomes" id="UP000001807">
    <property type="component" value="Chromosome"/>
</dbReference>
<dbReference type="GO" id="GO:0032153">
    <property type="term" value="C:cell division site"/>
    <property type="evidence" value="ECO:0007669"/>
    <property type="project" value="UniProtKB-UniRule"/>
</dbReference>
<dbReference type="GO" id="GO:0009898">
    <property type="term" value="C:cytoplasmic side of plasma membrane"/>
    <property type="evidence" value="ECO:0007669"/>
    <property type="project" value="UniProtKB-UniRule"/>
</dbReference>
<dbReference type="GO" id="GO:0043093">
    <property type="term" value="P:FtsZ-dependent cytokinesis"/>
    <property type="evidence" value="ECO:0007669"/>
    <property type="project" value="UniProtKB-UniRule"/>
</dbReference>
<dbReference type="CDD" id="cd24048">
    <property type="entry name" value="ASKHA_NBD_FtsA"/>
    <property type="match status" value="1"/>
</dbReference>
<dbReference type="Gene3D" id="3.30.1490.110">
    <property type="match status" value="1"/>
</dbReference>
<dbReference type="Gene3D" id="3.30.420.40">
    <property type="match status" value="1"/>
</dbReference>
<dbReference type="HAMAP" id="MF_02033">
    <property type="entry name" value="FtsA"/>
    <property type="match status" value="1"/>
</dbReference>
<dbReference type="InterPro" id="IPR043129">
    <property type="entry name" value="ATPase_NBD"/>
</dbReference>
<dbReference type="InterPro" id="IPR020823">
    <property type="entry name" value="Cell_div_FtsA"/>
</dbReference>
<dbReference type="InterPro" id="IPR050696">
    <property type="entry name" value="FtsA/MreB"/>
</dbReference>
<dbReference type="InterPro" id="IPR003494">
    <property type="entry name" value="SHS2_FtsA"/>
</dbReference>
<dbReference type="NCBIfam" id="TIGR01174">
    <property type="entry name" value="ftsA"/>
    <property type="match status" value="1"/>
</dbReference>
<dbReference type="PANTHER" id="PTHR32432:SF4">
    <property type="entry name" value="CELL DIVISION PROTEIN FTSA"/>
    <property type="match status" value="1"/>
</dbReference>
<dbReference type="PANTHER" id="PTHR32432">
    <property type="entry name" value="CELL DIVISION PROTEIN FTSA-RELATED"/>
    <property type="match status" value="1"/>
</dbReference>
<dbReference type="Pfam" id="PF14450">
    <property type="entry name" value="FtsA"/>
    <property type="match status" value="2"/>
</dbReference>
<dbReference type="Pfam" id="PF02491">
    <property type="entry name" value="SHS2_FTSA"/>
    <property type="match status" value="1"/>
</dbReference>
<dbReference type="PIRSF" id="PIRSF003101">
    <property type="entry name" value="FtsA"/>
    <property type="match status" value="1"/>
</dbReference>
<dbReference type="SMART" id="SM00842">
    <property type="entry name" value="FtsA"/>
    <property type="match status" value="1"/>
</dbReference>
<dbReference type="SUPFAM" id="SSF53067">
    <property type="entry name" value="Actin-like ATPase domain"/>
    <property type="match status" value="2"/>
</dbReference>
<sequence length="413" mass="45036">MSRNLIVGLDVGTSKICTVVAEVNLNDQLEIVGIGTSISRGVRKGVLINIEAALDSISNSIEAAELISGCDITSLSVSMSGSSVEGTNSRGVVAINSKTREINEEDVERVIEAAKAIVIPMDREILHVIPQEFIVDGIPHIKNPIDMMGIRLEGEVHIITGSSSSSQNLVRCVNRAGFAVDEVVLGSLASSYATLSKEEREMGVLFIDMGKGTTDIILYIDGSPYYTGVIPIGVNRVTLDIAQVWKVPEDVAENIKITAGIAHPSILESQMETVIIPNLGTRPPQEKSRKELSVIINSRLREIFEMMKAEILKRGLYNKINGGIVLTGGGALFPGISNLIEEVFNYPARIGLPMSINGIGEEHIDPKFSSALGLVLYKHEQQKFNKLKKVSSKVKRKNKISSKLKGWFLKEWF</sequence>
<feature type="chain" id="PRO_0000062730" description="Cell division protein FtsA">
    <location>
        <begin position="1"/>
        <end position="413"/>
    </location>
</feature>
<feature type="sequence conflict" description="In Ref. 2; CAA78155/CAA65463." evidence="2" ref="2">
    <original>E</original>
    <variation>G</variation>
    <location>
        <position position="155"/>
    </location>
</feature>
<accession>Q44774</accession>
<accession>Q44914</accession>
<accession>Q44923</accession>
<accession>Q57474</accession>
<evidence type="ECO:0000255" key="1">
    <source>
        <dbReference type="HAMAP-Rule" id="MF_02033"/>
    </source>
</evidence>
<evidence type="ECO:0000305" key="2"/>
<proteinExistence type="inferred from homology"/>
<gene>
    <name evidence="1" type="primary">ftsA</name>
    <name type="ordered locus">BB_0300</name>
</gene>
<keyword id="KW-0131">Cell cycle</keyword>
<keyword id="KW-0132">Cell division</keyword>
<keyword id="KW-0997">Cell inner membrane</keyword>
<keyword id="KW-1003">Cell membrane</keyword>
<keyword id="KW-0472">Membrane</keyword>
<keyword id="KW-1185">Reference proteome</keyword>